<comment type="subcellular location">
    <subcellularLocation>
        <location evidence="2">Cell membrane</location>
        <topology evidence="2">Multi-pass membrane protein</topology>
    </subcellularLocation>
</comment>
<comment type="similarity">
    <text evidence="2">Belongs to the Rht family.</text>
</comment>
<gene>
    <name type="ordered locus">HI_1307</name>
</gene>
<dbReference type="EMBL" id="L42023">
    <property type="protein sequence ID" value="AAC22954.1"/>
    <property type="molecule type" value="Genomic_DNA"/>
</dbReference>
<dbReference type="PIR" id="F64115">
    <property type="entry name" value="F64115"/>
</dbReference>
<dbReference type="RefSeq" id="NP_439458.1">
    <property type="nucleotide sequence ID" value="NC_000907.1"/>
</dbReference>
<dbReference type="STRING" id="71421.HI_1307"/>
<dbReference type="EnsemblBacteria" id="AAC22954">
    <property type="protein sequence ID" value="AAC22954"/>
    <property type="gene ID" value="HI_1307"/>
</dbReference>
<dbReference type="KEGG" id="hin:HI_1307"/>
<dbReference type="PATRIC" id="fig|71421.8.peg.1359"/>
<dbReference type="eggNOG" id="COG1280">
    <property type="taxonomic scope" value="Bacteria"/>
</dbReference>
<dbReference type="HOGENOM" id="CLU_079569_0_1_6"/>
<dbReference type="OrthoDB" id="581870at2"/>
<dbReference type="PhylomeDB" id="Q57320"/>
<dbReference type="BioCyc" id="HINF71421:G1GJ1-1332-MONOMER"/>
<dbReference type="Proteomes" id="UP000000579">
    <property type="component" value="Chromosome"/>
</dbReference>
<dbReference type="GO" id="GO:0005886">
    <property type="term" value="C:plasma membrane"/>
    <property type="evidence" value="ECO:0000318"/>
    <property type="project" value="GO_Central"/>
</dbReference>
<dbReference type="GO" id="GO:0015171">
    <property type="term" value="F:amino acid transmembrane transporter activity"/>
    <property type="evidence" value="ECO:0000318"/>
    <property type="project" value="GO_Central"/>
</dbReference>
<dbReference type="GO" id="GO:0006865">
    <property type="term" value="P:amino acid transport"/>
    <property type="evidence" value="ECO:0000318"/>
    <property type="project" value="GO_Central"/>
</dbReference>
<dbReference type="InterPro" id="IPR004778">
    <property type="entry name" value="Homoserine/Threonine_efflux"/>
</dbReference>
<dbReference type="InterPro" id="IPR001123">
    <property type="entry name" value="LeuE-type"/>
</dbReference>
<dbReference type="NCBIfam" id="TIGR00949">
    <property type="entry name" value="2A76"/>
    <property type="match status" value="1"/>
</dbReference>
<dbReference type="PANTHER" id="PTHR30086">
    <property type="entry name" value="ARGININE EXPORTER PROTEIN ARGO"/>
    <property type="match status" value="1"/>
</dbReference>
<dbReference type="PANTHER" id="PTHR30086:SF19">
    <property type="entry name" value="THREONINE EFFLUX PROTEIN"/>
    <property type="match status" value="1"/>
</dbReference>
<dbReference type="Pfam" id="PF01810">
    <property type="entry name" value="LysE"/>
    <property type="match status" value="1"/>
</dbReference>
<sequence length="210" mass="23636">MMLNLIIVHLFGLMTPGPDFFYVSRMAASNSRRNTVCGILGITLGIAFWGMLSMLGLAVLFVTIPALHGVIMLLGGSYLAYLGFLMARSKKYAKFESHSDTEFNQQTTIKKEILKGLLVNLSNAKVVVYFSSVMSLVLVNITEMWQIILAFAVIVVETFCYFYVISLIFSRNIAKRLYSQYSRYIDNMAGIVFLFFGCVLVYNGINEIIH</sequence>
<evidence type="ECO:0000255" key="1"/>
<evidence type="ECO:0000305" key="2"/>
<feature type="chain" id="PRO_0000094744" description="Uncharacterized membrane protein HI_1307">
    <location>
        <begin position="1"/>
        <end position="210"/>
    </location>
</feature>
<feature type="transmembrane region" description="Helical" evidence="1">
    <location>
        <begin position="42"/>
        <end position="62"/>
    </location>
</feature>
<feature type="transmembrane region" description="Helical" evidence="1">
    <location>
        <begin position="66"/>
        <end position="86"/>
    </location>
</feature>
<feature type="transmembrane region" description="Helical" evidence="1">
    <location>
        <begin position="126"/>
        <end position="146"/>
    </location>
</feature>
<feature type="transmembrane region" description="Helical" evidence="1">
    <location>
        <begin position="147"/>
        <end position="167"/>
    </location>
</feature>
<feature type="transmembrane region" description="Helical" evidence="1">
    <location>
        <begin position="189"/>
        <end position="209"/>
    </location>
</feature>
<reference key="1">
    <citation type="journal article" date="1995" name="Science">
        <title>Whole-genome random sequencing and assembly of Haemophilus influenzae Rd.</title>
        <authorList>
            <person name="Fleischmann R.D."/>
            <person name="Adams M.D."/>
            <person name="White O."/>
            <person name="Clayton R.A."/>
            <person name="Kirkness E.F."/>
            <person name="Kerlavage A.R."/>
            <person name="Bult C.J."/>
            <person name="Tomb J.-F."/>
            <person name="Dougherty B.A."/>
            <person name="Merrick J.M."/>
            <person name="McKenney K."/>
            <person name="Sutton G.G."/>
            <person name="FitzHugh W."/>
            <person name="Fields C.A."/>
            <person name="Gocayne J.D."/>
            <person name="Scott J.D."/>
            <person name="Shirley R."/>
            <person name="Liu L.-I."/>
            <person name="Glodek A."/>
            <person name="Kelley J.M."/>
            <person name="Weidman J.F."/>
            <person name="Phillips C.A."/>
            <person name="Spriggs T."/>
            <person name="Hedblom E."/>
            <person name="Cotton M.D."/>
            <person name="Utterback T.R."/>
            <person name="Hanna M.C."/>
            <person name="Nguyen D.T."/>
            <person name="Saudek D.M."/>
            <person name="Brandon R.C."/>
            <person name="Fine L.D."/>
            <person name="Fritchman J.L."/>
            <person name="Fuhrmann J.L."/>
            <person name="Geoghagen N.S.M."/>
            <person name="Gnehm C.L."/>
            <person name="McDonald L.A."/>
            <person name="Small K.V."/>
            <person name="Fraser C.M."/>
            <person name="Smith H.O."/>
            <person name="Venter J.C."/>
        </authorList>
    </citation>
    <scope>NUCLEOTIDE SEQUENCE [LARGE SCALE GENOMIC DNA]</scope>
    <source>
        <strain>ATCC 51907 / DSM 11121 / KW20 / Rd</strain>
    </source>
</reference>
<proteinExistence type="inferred from homology"/>
<protein>
    <recommendedName>
        <fullName>Uncharacterized membrane protein HI_1307</fullName>
    </recommendedName>
</protein>
<name>Y1307_HAEIN</name>
<organism>
    <name type="scientific">Haemophilus influenzae (strain ATCC 51907 / DSM 11121 / KW20 / Rd)</name>
    <dbReference type="NCBI Taxonomy" id="71421"/>
    <lineage>
        <taxon>Bacteria</taxon>
        <taxon>Pseudomonadati</taxon>
        <taxon>Pseudomonadota</taxon>
        <taxon>Gammaproteobacteria</taxon>
        <taxon>Pasteurellales</taxon>
        <taxon>Pasteurellaceae</taxon>
        <taxon>Haemophilus</taxon>
    </lineage>
</organism>
<keyword id="KW-1003">Cell membrane</keyword>
<keyword id="KW-0472">Membrane</keyword>
<keyword id="KW-1185">Reference proteome</keyword>
<keyword id="KW-0812">Transmembrane</keyword>
<keyword id="KW-1133">Transmembrane helix</keyword>
<accession>Q57320</accession>
<accession>O05057</accession>